<gene>
    <name evidence="1" type="primary">treT</name>
    <name type="ordered locus">PF1742</name>
</gene>
<protein>
    <recommendedName>
        <fullName evidence="1 5">Trehalose synthase</fullName>
        <ecNumber>2.4.1.245</ecNumber>
    </recommendedName>
    <alternativeName>
        <fullName evidence="1">Trehalose glycosyltransferring synthase</fullName>
    </alternativeName>
</protein>
<evidence type="ECO:0000250" key="1">
    <source>
        <dbReference type="UniProtKB" id="Q7LYW5"/>
    </source>
</evidence>
<evidence type="ECO:0000269" key="2">
    <source>
    </source>
</evidence>
<evidence type="ECO:0000305" key="3"/>
<evidence type="ECO:0000312" key="4">
    <source>
        <dbReference type="EMBL" id="AAG45375.1"/>
    </source>
</evidence>
<evidence type="ECO:0000312" key="5">
    <source>
        <dbReference type="EMBL" id="AAL81866.1"/>
    </source>
</evidence>
<organism>
    <name type="scientific">Pyrococcus furiosus (strain ATCC 43587 / DSM 3638 / JCM 8422 / Vc1)</name>
    <dbReference type="NCBI Taxonomy" id="186497"/>
    <lineage>
        <taxon>Archaea</taxon>
        <taxon>Methanobacteriati</taxon>
        <taxon>Methanobacteriota</taxon>
        <taxon>Thermococci</taxon>
        <taxon>Thermococcales</taxon>
        <taxon>Thermococcaceae</taxon>
        <taxon>Pyrococcus</taxon>
    </lineage>
</organism>
<reference evidence="4" key="1">
    <citation type="journal article" date="2000" name="Mol. Microbiol.">
        <title>Evidence of recent lateral gene transfer among hyperthermophilic archaea.</title>
        <authorList>
            <person name="Diruggiero J."/>
            <person name="Dunn D."/>
            <person name="Maeder D.L."/>
            <person name="Holley-Shanks R."/>
            <person name="Chatard J."/>
            <person name="Horlacher R."/>
            <person name="Robb F.T."/>
            <person name="Boos W."/>
            <person name="Weiss R.B."/>
        </authorList>
    </citation>
    <scope>NUCLEOTIDE SEQUENCE [GENOMIC DNA]</scope>
    <source>
        <strain evidence="2">ATCC 43587 / DSM 3638 / JCM 8422 / Vc1</strain>
    </source>
</reference>
<reference key="2">
    <citation type="journal article" date="1999" name="Genetics">
        <title>Divergence of the hyperthermophilic archaea Pyrococcus furiosus and P. horikoshii inferred from complete genomic sequences.</title>
        <authorList>
            <person name="Maeder D.L."/>
            <person name="Weiss R.B."/>
            <person name="Dunn D.M."/>
            <person name="Cherry J.L."/>
            <person name="Gonzalez J.M."/>
            <person name="DiRuggiero J."/>
            <person name="Robb F.T."/>
        </authorList>
    </citation>
    <scope>NUCLEOTIDE SEQUENCE [LARGE SCALE GENOMIC DNA]</scope>
    <source>
        <strain>ATCC 43587 / DSM 3638 / JCM 8422 / Vc1</strain>
    </source>
</reference>
<comment type="function">
    <text evidence="1">Synthesizes trehalose from ADP-glucose and glucose. Has a much lower activity toward UDP-glucose and GDP-glucose. The reaction is reversible, the equilibrium strongly favors trehalose synthesis (By similarity).</text>
</comment>
<comment type="catalytic activity">
    <reaction>
        <text>an NDP-alpha-D-glucose + D-glucose = alpha,alpha-trehalose + a ribonucleoside 5'-diphosphate + H(+)</text>
        <dbReference type="Rhea" id="RHEA:47416"/>
        <dbReference type="ChEBI" id="CHEBI:4167"/>
        <dbReference type="ChEBI" id="CHEBI:15378"/>
        <dbReference type="ChEBI" id="CHEBI:16551"/>
        <dbReference type="ChEBI" id="CHEBI:57930"/>
        <dbReference type="ChEBI" id="CHEBI:76533"/>
        <dbReference type="EC" id="2.4.1.245"/>
    </reaction>
</comment>
<comment type="cofactor">
    <cofactor evidence="1">
        <name>Mg(2+)</name>
        <dbReference type="ChEBI" id="CHEBI:18420"/>
    </cofactor>
</comment>
<comment type="subunit">
    <text evidence="1">Homodimer.</text>
</comment>
<comment type="similarity">
    <text evidence="3">Belongs to the glycosyltransferase group 1 family. Glycosyltransferase 4 subfamily.</text>
</comment>
<proteinExistence type="inferred from homology"/>
<keyword id="KW-0119">Carbohydrate metabolism</keyword>
<keyword id="KW-0313">Glucose metabolism</keyword>
<keyword id="KW-0328">Glycosyltransferase</keyword>
<keyword id="KW-0460">Magnesium</keyword>
<keyword id="KW-1185">Reference proteome</keyword>
<keyword id="KW-0808">Transferase</keyword>
<name>TRET_PYRFU</name>
<sequence length="412" mass="48017">MYEVTKFGGEGKRLEDYREIIGDEALEAIKAKAENLKDKSFVHVNSTSFGGGVAEILHNLVPLMRDVGIDARWFVIEGTNEFFNVTKSFHNALQGNKELRLTEEMKKLYLEINKKNAEDIDLTQFDYVLIHDPQPAPLIEFYEKRQPWIWRCHIDLSDPNLEFWKFLRQFVEKYDRYIFHMEEYVQEDLNQEKVVIMPPSIDPLSEKNMELSESEILKTLERFDVDPERPIITQVARFDPWKGVFDVIDVYRKVKEKIPEVQLLLVGVMAHDDPEGWIYFEKTLRKIGEDYDIKVLTNLTGVHAREVNAFQRASDVILQMSIREGFGLTVTEAMWKEKPVVGRAVGGIKLQIVDGKTGFLVKDVNDAIEKTLYLLEHKDVAQEMGKNAKERIKENFIITKHLERYLDLLNSF</sequence>
<dbReference type="EC" id="2.4.1.245"/>
<dbReference type="EMBL" id="AF307052">
    <property type="protein sequence ID" value="AAG45375.1"/>
    <property type="molecule type" value="Genomic_DNA"/>
</dbReference>
<dbReference type="EMBL" id="AE009950">
    <property type="protein sequence ID" value="AAL81866.1"/>
    <property type="molecule type" value="Genomic_DNA"/>
</dbReference>
<dbReference type="RefSeq" id="WP_004068720.1">
    <property type="nucleotide sequence ID" value="NC_003413.1"/>
</dbReference>
<dbReference type="SMR" id="Q9HH00"/>
<dbReference type="STRING" id="186497.PF1742"/>
<dbReference type="CAZy" id="GT4">
    <property type="family name" value="Glycosyltransferase Family 4"/>
</dbReference>
<dbReference type="PaxDb" id="186497-PF1742"/>
<dbReference type="GeneID" id="16548946"/>
<dbReference type="KEGG" id="pfu:PF1742"/>
<dbReference type="PATRIC" id="fig|186497.12.peg.1811"/>
<dbReference type="eggNOG" id="arCOG01407">
    <property type="taxonomic scope" value="Archaea"/>
</dbReference>
<dbReference type="HOGENOM" id="CLU_045353_0_0_2"/>
<dbReference type="OrthoDB" id="132546at2157"/>
<dbReference type="PhylomeDB" id="Q9HH00"/>
<dbReference type="Proteomes" id="UP000001013">
    <property type="component" value="Chromosome"/>
</dbReference>
<dbReference type="GO" id="GO:0102986">
    <property type="term" value="F:trehalose synthase activity"/>
    <property type="evidence" value="ECO:0007669"/>
    <property type="project" value="UniProtKB-EC"/>
</dbReference>
<dbReference type="GO" id="GO:0006006">
    <property type="term" value="P:glucose metabolic process"/>
    <property type="evidence" value="ECO:0007669"/>
    <property type="project" value="UniProtKB-KW"/>
</dbReference>
<dbReference type="Gene3D" id="3.40.50.2000">
    <property type="entry name" value="Glycogen Phosphorylase B"/>
    <property type="match status" value="2"/>
</dbReference>
<dbReference type="InterPro" id="IPR001296">
    <property type="entry name" value="Glyco_trans_1"/>
</dbReference>
<dbReference type="InterPro" id="IPR052078">
    <property type="entry name" value="Trehalose_Metab_GTase"/>
</dbReference>
<dbReference type="InterPro" id="IPR053462">
    <property type="entry name" value="Trehalose_synthase_GT"/>
</dbReference>
<dbReference type="InterPro" id="IPR049438">
    <property type="entry name" value="TreT_GT1"/>
</dbReference>
<dbReference type="NCBIfam" id="NF041139">
    <property type="entry name" value="TreT_Thcocales"/>
    <property type="match status" value="1"/>
</dbReference>
<dbReference type="PANTHER" id="PTHR47779">
    <property type="entry name" value="SYNTHASE (CCG-9), PUTATIVE (AFU_ORTHOLOGUE AFUA_3G12100)-RELATED"/>
    <property type="match status" value="1"/>
</dbReference>
<dbReference type="PANTHER" id="PTHR47779:SF1">
    <property type="entry name" value="SYNTHASE (CCG-9), PUTATIVE (AFU_ORTHOLOGUE AFUA_3G12100)-RELATED"/>
    <property type="match status" value="1"/>
</dbReference>
<dbReference type="Pfam" id="PF00534">
    <property type="entry name" value="Glycos_transf_1"/>
    <property type="match status" value="1"/>
</dbReference>
<dbReference type="Pfam" id="PF21269">
    <property type="entry name" value="TreT_GT1"/>
    <property type="match status" value="1"/>
</dbReference>
<dbReference type="SUPFAM" id="SSF53756">
    <property type="entry name" value="UDP-Glycosyltransferase/glycogen phosphorylase"/>
    <property type="match status" value="1"/>
</dbReference>
<feature type="chain" id="PRO_0000405299" description="Trehalose synthase">
    <location>
        <begin position="1"/>
        <end position="412"/>
    </location>
</feature>
<accession>Q9HH00</accession>
<accession>E7FI30</accession>
<accession>Q7LYC8</accession>